<gene>
    <name evidence="7" type="primary">phomYd'</name>
    <name evidence="6" type="synonym">phomD</name>
</gene>
<evidence type="ECO:0000250" key="1">
    <source>
        <dbReference type="UniProtKB" id="B8NM67"/>
    </source>
</evidence>
<evidence type="ECO:0000255" key="2"/>
<evidence type="ECO:0000255" key="3">
    <source>
        <dbReference type="PROSITE-ProRule" id="PRU00498"/>
    </source>
</evidence>
<evidence type="ECO:0000256" key="4">
    <source>
        <dbReference type="SAM" id="MobiDB-lite"/>
    </source>
</evidence>
<evidence type="ECO:0000269" key="5">
    <source>
    </source>
</evidence>
<evidence type="ECO:0000303" key="6">
    <source>
    </source>
</evidence>
<evidence type="ECO:0000303" key="7">
    <source>
    </source>
</evidence>
<evidence type="ECO:0000305" key="8"/>
<evidence type="ECO:0000305" key="9">
    <source>
    </source>
</evidence>
<dbReference type="EC" id="1.-.-.-" evidence="9"/>
<dbReference type="EMBL" id="KU645842">
    <property type="protein sequence ID" value="AMR44290.1"/>
    <property type="molecule type" value="Genomic_DNA"/>
</dbReference>
<dbReference type="SMR" id="A0A142I738"/>
<dbReference type="GO" id="GO:0016020">
    <property type="term" value="C:membrane"/>
    <property type="evidence" value="ECO:0007669"/>
    <property type="project" value="UniProtKB-SubCell"/>
</dbReference>
<dbReference type="GO" id="GO:0016491">
    <property type="term" value="F:oxidoreductase activity"/>
    <property type="evidence" value="ECO:0007669"/>
    <property type="project" value="UniProtKB-KW"/>
</dbReference>
<dbReference type="GO" id="GO:0043386">
    <property type="term" value="P:mycotoxin biosynthetic process"/>
    <property type="evidence" value="ECO:0007669"/>
    <property type="project" value="InterPro"/>
</dbReference>
<dbReference type="InterPro" id="IPR021765">
    <property type="entry name" value="UstYa-like"/>
</dbReference>
<dbReference type="PANTHER" id="PTHR33365:SF4">
    <property type="entry name" value="CYCLOCHLOROTINE BIOSYNTHESIS PROTEIN O"/>
    <property type="match status" value="1"/>
</dbReference>
<dbReference type="PANTHER" id="PTHR33365">
    <property type="entry name" value="YALI0B05434P"/>
    <property type="match status" value="1"/>
</dbReference>
<dbReference type="Pfam" id="PF11807">
    <property type="entry name" value="UstYa"/>
    <property type="match status" value="1"/>
</dbReference>
<proteinExistence type="inferred from homology"/>
<protein>
    <recommendedName>
        <fullName evidence="7">UstYa family oxidase phomYd'</fullName>
        <ecNumber evidence="9">1.-.-.-</ecNumber>
    </recommendedName>
    <alternativeName>
        <fullName evidence="7">Phomopsin biosynthesis cluster protein Yd'</fullName>
    </alternativeName>
</protein>
<feature type="chain" id="PRO_0000458341" description="UstYa family oxidase phomYd'">
    <location>
        <begin position="1"/>
        <end position="234"/>
    </location>
</feature>
<feature type="transmembrane region" description="Helical" evidence="2">
    <location>
        <begin position="47"/>
        <end position="69"/>
    </location>
</feature>
<feature type="region of interest" description="Disordered" evidence="4">
    <location>
        <begin position="1"/>
        <end position="26"/>
    </location>
</feature>
<feature type="short sequence motif" description="HXXHC 1" evidence="1">
    <location>
        <begin position="151"/>
        <end position="155"/>
    </location>
</feature>
<feature type="glycosylation site" description="N-linked (GlcNAc...) asparagine" evidence="3">
    <location>
        <position position="208"/>
    </location>
</feature>
<accession>A0A142I738</accession>
<reference key="1">
    <citation type="journal article" date="2016" name="Proc. Natl. Acad. Sci. U.S.A.">
        <title>Biosynthetic investigation of phomopsins reveals a widespread pathway for ribosomal natural products in Ascomycetes.</title>
        <authorList>
            <person name="Ding W."/>
            <person name="Liu W.Q."/>
            <person name="Jia Y."/>
            <person name="Li Y."/>
            <person name="van der Donk W.A."/>
            <person name="Zhang Q."/>
        </authorList>
    </citation>
    <scope>NUCLEOTIDE SEQUENCE [GENOMIC DNA]</scope>
    <scope>FUNCTION</scope>
    <source>
        <strain>ATCC 26115 / IMI 115107 / C 1557</strain>
    </source>
</reference>
<reference key="2">
    <citation type="journal article" date="2021" name="Angew. Chem. Int. Ed.">
        <title>Biosynthetic studies of phomopsins unveil posttranslational installation of dehydroamino acids by ustYa family proteins.</title>
        <authorList>
            <person name="Sogahata K."/>
            <person name="Ozaki T."/>
            <person name="Igarashi Y."/>
            <person name="Naganuma Y."/>
            <person name="Liu C."/>
            <person name="Minami A."/>
            <person name="Oikawa H."/>
        </authorList>
    </citation>
    <scope>NOMENCLATURE</scope>
    <scope>FUNCTION</scope>
    <source>
        <strain>ATCC 26115 / IMI 115107 / C 1557</strain>
    </source>
</reference>
<keyword id="KW-0325">Glycoprotein</keyword>
<keyword id="KW-0472">Membrane</keyword>
<keyword id="KW-0560">Oxidoreductase</keyword>
<keyword id="KW-0812">Transmembrane</keyword>
<keyword id="KW-1133">Transmembrane helix</keyword>
<keyword id="KW-0843">Virulence</keyword>
<name>PHYD2_DIALO</name>
<comment type="function">
    <text evidence="5 9">UstYa family oxidase; part of the gene cluster that mediates the biosynthesis of the phomopsins, a group of hexapeptide mycotoxins which infects lupins and causes lupinosis disease in livestock (PubMed:34608734). Within the pathway, phomYd' catalyzes the desaturation of the Asp moiety into 2,3-dehydroaspartic acid (dAsp) (PubMed:34608734). The pathway starts with the processing of the precursor phomA' by several endopeptidases including kexin proteases as well as the cluster-specific S41 family peptidase phomP1 and the oligopeptidase phomG' to produce 10 identical copies of the hexapeptide Tyr-Val-Ile-Pro-Ile-Asp. After being excised from the precursor peptide, the core peptides are cyclized and modified post-translationally by enzymes encoded within the gene cluster. The timing and order of proteolysis of the phomA' precursor and PTMs are still unknown. Two tyrosinase-like enzymes, phomQ1' and phomQ2, catalyze the chlorination and hydroxylation of Tyr, respectively. PhomYb, is proposed to be involved in the construction of the macrocyclic structure. The other 4 ustYa family proteins may be involved in PTMs that generate the unique structure of phomopsin A. PhomYa' is required for the hydroxylation of C-beta of Tyr. PhomYc', phomYd', and phomYe are responsible for the biosynthesis of 2,3-dehydroisoleucine (dIle), 2,3-dehydroaspartic acid (dAsp), and 3,4-dehydroproline (dPro), respectively. While dIle formation by phomYc' is indispensable for the installation of dAsp by phomYd', the order of the other PTMs have not been elucidated yet. Most of the biosynthetic enzymes likely have broad substrate specificity, and thus, there might be a metabolic grid from a precursor to phomopsin A. The enzyme(s) responsible for the biosynthesis of 3,4-dehydrovaline (dVal) have also not been identified yet. Finally, phomM' acts as an S-adenosylmethionine-dependent alpha-N-methyltransferase that catalyzes two successive N-methylation reactions, converting N-desmethyl-phomopsin A to phomopsin A and phomopsin A further to an N,N-dimethylated congener called phomopsin E (Probable).</text>
</comment>
<comment type="pathway">
    <text evidence="9">Mycotoxin biosynthesis.</text>
</comment>
<comment type="subcellular location">
    <subcellularLocation>
        <location evidence="2">Membrane</location>
        <topology evidence="2">Single-pass membrane protein</topology>
    </subcellularLocation>
</comment>
<comment type="domain">
    <text evidence="1">The 2 HXXHC motifs are conserved in ustYa family proteins and might form active sites.</text>
</comment>
<comment type="similarity">
    <text evidence="8">Belongs to the ustYa family.</text>
</comment>
<sequence>MEKFFSPSRHNYADLSPTDVPASEESDEALEEKQFEYFQQRQHRRLVLVNRLLAASTVALVMVSLWLGWELHTAKFGSMGSFPYGFKYELEAAKKVIKLEEYKFLGSPIFLDDGTELVPEPTPGPMKTLGVTDMYVGEPSKELDWNWNQLHWDHCLNHLRQMILCQGDLTPIPSKYYRGITDNYIFGDMPHTCRNWDSVREFITDRFNGSSAVPLAPGTVLSDPYKKLLGILDE</sequence>
<organism>
    <name type="scientific">Diaporthe leptostromiformis</name>
    <name type="common">Lupinosis disease fungus</name>
    <name type="synonym">Phomopsis leptostromiformis</name>
    <dbReference type="NCBI Taxonomy" id="291059"/>
    <lineage>
        <taxon>Eukaryota</taxon>
        <taxon>Fungi</taxon>
        <taxon>Dikarya</taxon>
        <taxon>Ascomycota</taxon>
        <taxon>Pezizomycotina</taxon>
        <taxon>Sordariomycetes</taxon>
        <taxon>Sordariomycetidae</taxon>
        <taxon>Diaporthales</taxon>
        <taxon>Diaporthaceae</taxon>
        <taxon>Diaporthe</taxon>
    </lineage>
</organism>